<name>UGTP_STAA2</name>
<feature type="chain" id="PRO_1000085891" description="Processive diacylglycerol beta-glucosyltransferase">
    <location>
        <begin position="1"/>
        <end position="391"/>
    </location>
</feature>
<organism>
    <name type="scientific">Staphylococcus aureus (strain JH1)</name>
    <dbReference type="NCBI Taxonomy" id="359787"/>
    <lineage>
        <taxon>Bacteria</taxon>
        <taxon>Bacillati</taxon>
        <taxon>Bacillota</taxon>
        <taxon>Bacilli</taxon>
        <taxon>Bacillales</taxon>
        <taxon>Staphylococcaceae</taxon>
        <taxon>Staphylococcus</taxon>
    </lineage>
</organism>
<accession>A6U0C2</accession>
<comment type="function">
    <text evidence="1">Processive glucosyltransferase involved in the biosynthesis of both the bilayer- and non-bilayer-forming membrane glucolipids. Is able to successively transfer two glucosyl residues to diacylglycerol (DAG), thereby catalyzing the formation of beta-monoglucosyl-DAG (3-O-(beta-D-glucopyranosyl)-1,2-diacyl-sn-glycerol) and beta-diglucosyl-DAG (3-O-(beta-D-glucopyranosyl-beta-(1-&gt;6)-D-glucopyranosyl)-1,2-diacyl-sn-glycerol). Beta-diglucosyl-DAG is the predominant glycolipid found in Bacillales and is also used as a membrane anchor for lipoteichoic acid (LTA).</text>
</comment>
<comment type="catalytic activity">
    <reaction>
        <text>a 1,2-diacyl-3-O-(beta-D-glucopyranosyl)-sn-glycerol + UDP-alpha-D-glucose = a 1,2-diacyl-3-O-(beta-D-Glc-(1-&gt;6)-beta-D-Glc)-sn-glycerol + UDP + H(+)</text>
        <dbReference type="Rhea" id="RHEA:39031"/>
        <dbReference type="ChEBI" id="CHEBI:15378"/>
        <dbReference type="ChEBI" id="CHEBI:58223"/>
        <dbReference type="ChEBI" id="CHEBI:58885"/>
        <dbReference type="ChEBI" id="CHEBI:75799"/>
        <dbReference type="ChEBI" id="CHEBI:76264"/>
        <dbReference type="EC" id="2.4.1.315"/>
    </reaction>
</comment>
<comment type="catalytic activity">
    <reaction evidence="1">
        <text>a 1,2-diacyl-sn-glycerol + UDP-alpha-D-glucose = a 1,2-diacyl-3-O-(beta-D-glucopyranosyl)-sn-glycerol + UDP + H(+)</text>
        <dbReference type="Rhea" id="RHEA:17285"/>
        <dbReference type="ChEBI" id="CHEBI:15378"/>
        <dbReference type="ChEBI" id="CHEBI:17815"/>
        <dbReference type="ChEBI" id="CHEBI:58223"/>
        <dbReference type="ChEBI" id="CHEBI:58885"/>
        <dbReference type="ChEBI" id="CHEBI:75799"/>
    </reaction>
</comment>
<comment type="pathway">
    <text evidence="1">Glycolipid metabolism; diglucosyl-diacylglycerol biosynthesis.</text>
</comment>
<comment type="subcellular location">
    <subcellularLocation>
        <location evidence="1">Cell membrane</location>
    </subcellularLocation>
</comment>
<comment type="similarity">
    <text evidence="1">Belongs to the glycosyltransferase 28 family. UgtP subfamily.</text>
</comment>
<dbReference type="EC" id="2.4.1.315"/>
<dbReference type="EMBL" id="CP000736">
    <property type="protein sequence ID" value="ABR51890.1"/>
    <property type="molecule type" value="Genomic_DNA"/>
</dbReference>
<dbReference type="SMR" id="A6U0C2"/>
<dbReference type="CAZy" id="GT28">
    <property type="family name" value="Glycosyltransferase Family 28"/>
</dbReference>
<dbReference type="KEGG" id="sah:SaurJH1_1034"/>
<dbReference type="HOGENOM" id="CLU_028367_0_1_9"/>
<dbReference type="UniPathway" id="UPA00894"/>
<dbReference type="GO" id="GO:0005886">
    <property type="term" value="C:plasma membrane"/>
    <property type="evidence" value="ECO:0007669"/>
    <property type="project" value="UniProtKB-SubCell"/>
</dbReference>
<dbReference type="GO" id="GO:0047228">
    <property type="term" value="F:1,2-diacylglycerol 3-glucosyltransferase activity"/>
    <property type="evidence" value="ECO:0007669"/>
    <property type="project" value="UniProtKB-UniRule"/>
</dbReference>
<dbReference type="GO" id="GO:0009246">
    <property type="term" value="P:enterobacterial common antigen biosynthetic process"/>
    <property type="evidence" value="ECO:0007669"/>
    <property type="project" value="UniProtKB-UniPathway"/>
</dbReference>
<dbReference type="GO" id="GO:0009247">
    <property type="term" value="P:glycolipid biosynthetic process"/>
    <property type="evidence" value="ECO:0007669"/>
    <property type="project" value="UniProtKB-UniRule"/>
</dbReference>
<dbReference type="GO" id="GO:0070395">
    <property type="term" value="P:lipoteichoic acid biosynthetic process"/>
    <property type="evidence" value="ECO:0007669"/>
    <property type="project" value="UniProtKB-UniRule"/>
</dbReference>
<dbReference type="CDD" id="cd17507">
    <property type="entry name" value="GT28_Beta-DGS-like"/>
    <property type="match status" value="1"/>
</dbReference>
<dbReference type="Gene3D" id="3.40.50.2000">
    <property type="entry name" value="Glycogen Phosphorylase B"/>
    <property type="match status" value="2"/>
</dbReference>
<dbReference type="HAMAP" id="MF_01280">
    <property type="entry name" value="Diacylglyc_glucosyltr"/>
    <property type="match status" value="1"/>
</dbReference>
<dbReference type="InterPro" id="IPR009695">
    <property type="entry name" value="Diacylglyc_glucosyltr_N"/>
</dbReference>
<dbReference type="InterPro" id="IPR007235">
    <property type="entry name" value="Glyco_trans_28_C"/>
</dbReference>
<dbReference type="InterPro" id="IPR050519">
    <property type="entry name" value="Glycosyltransf_28_UgtP"/>
</dbReference>
<dbReference type="InterPro" id="IPR023589">
    <property type="entry name" value="Pro_diacylglycrl_glcsylTrfase"/>
</dbReference>
<dbReference type="NCBIfam" id="NF010134">
    <property type="entry name" value="PRK13608.1"/>
    <property type="match status" value="1"/>
</dbReference>
<dbReference type="PANTHER" id="PTHR43025">
    <property type="entry name" value="MONOGALACTOSYLDIACYLGLYCEROL SYNTHASE"/>
    <property type="match status" value="1"/>
</dbReference>
<dbReference type="PANTHER" id="PTHR43025:SF3">
    <property type="entry name" value="MONOGALACTOSYLDIACYLGLYCEROL SYNTHASE 1, CHLOROPLASTIC"/>
    <property type="match status" value="1"/>
</dbReference>
<dbReference type="Pfam" id="PF04101">
    <property type="entry name" value="Glyco_tran_28_C"/>
    <property type="match status" value="1"/>
</dbReference>
<dbReference type="Pfam" id="PF06925">
    <property type="entry name" value="MGDG_synth"/>
    <property type="match status" value="1"/>
</dbReference>
<dbReference type="SUPFAM" id="SSF53756">
    <property type="entry name" value="UDP-Glycosyltransferase/glycogen phosphorylase"/>
    <property type="match status" value="1"/>
</dbReference>
<protein>
    <recommendedName>
        <fullName evidence="1">Processive diacylglycerol beta-glucosyltransferase</fullName>
        <ecNumber>2.4.1.315</ecNumber>
    </recommendedName>
    <alternativeName>
        <fullName evidence="1">Beta-diglucosyldiacylglycerol synthase</fullName>
        <shortName evidence="1">Beta-DGS</shortName>
        <shortName evidence="1">DGlcDAG synthase</shortName>
        <shortName evidence="1">Glc2-DAG synthase</shortName>
    </alternativeName>
    <alternativeName>
        <fullName evidence="1">Beta-gentiobiosyldiacylglycerol synthase</fullName>
    </alternativeName>
    <alternativeName>
        <fullName evidence="1">Beta-monoglucosyldiacylglycerol synthase</fullName>
        <shortName evidence="1">Beta-MGS</shortName>
        <shortName evidence="1">MGlcDAG synthase</shortName>
    </alternativeName>
    <alternativeName>
        <fullName>Diglucosyl diacylglycerol synthase (1,6-linking)</fullName>
    </alternativeName>
    <alternativeName>
        <fullName evidence="1">Glucosyl-beta-1,6-glucosyldiacylglycerol synthase</fullName>
    </alternativeName>
    <alternativeName>
        <fullName evidence="1">UDP glucosyltransferase</fullName>
    </alternativeName>
    <alternativeName>
        <fullName evidence="1">UDP-glucose:1,2-diacylglycerol-3-beta-D-glucosyltransferase</fullName>
    </alternativeName>
</protein>
<sequence>MVTQNKKILIITGSFGNGHMQVTQSIVNQLNDMNLDHLSVIEHDLFMEAHPILTSICKKWYINSFKYFRNMYKGFYYSRPDKLDKCFYKYYGLNKLINLLIKEKPDLILLTFPTPVMSVLTEQFNINIPVATVMTDYRLHKNWITPYSTRYYVATKETKQDFIDVGIDPSTVKVTGIPIDNKFETPINQKQWLIDNNLDPDKQTILMSAGAFGVSKGFDTMITDILAKSANAQVVMICGKSKELKRSLIAKFKSNENVLILGYTKHMNEWMASSQLMITKPGGITITEGFARCIPMIFLNPAPGQELENALYFEEKGFGKIADTPEEAIKIVASLTNGNEQLTNMISTMEQDKIKYATQTICRDLLDLIGHSSQPQEIYGKVPLYARFFVK</sequence>
<proteinExistence type="inferred from homology"/>
<keyword id="KW-0119">Carbohydrate metabolism</keyword>
<keyword id="KW-1003">Cell membrane</keyword>
<keyword id="KW-0328">Glycosyltransferase</keyword>
<keyword id="KW-0444">Lipid biosynthesis</keyword>
<keyword id="KW-0443">Lipid metabolism</keyword>
<keyword id="KW-0472">Membrane</keyword>
<keyword id="KW-0808">Transferase</keyword>
<evidence type="ECO:0000255" key="1">
    <source>
        <dbReference type="HAMAP-Rule" id="MF_01280"/>
    </source>
</evidence>
<reference key="1">
    <citation type="submission" date="2007-06" db="EMBL/GenBank/DDBJ databases">
        <title>Complete sequence of chromosome of Staphylococcus aureus subsp. aureus JH1.</title>
        <authorList>
            <consortium name="US DOE Joint Genome Institute"/>
            <person name="Copeland A."/>
            <person name="Lucas S."/>
            <person name="Lapidus A."/>
            <person name="Barry K."/>
            <person name="Detter J.C."/>
            <person name="Glavina del Rio T."/>
            <person name="Hammon N."/>
            <person name="Israni S."/>
            <person name="Dalin E."/>
            <person name="Tice H."/>
            <person name="Pitluck S."/>
            <person name="Chain P."/>
            <person name="Malfatti S."/>
            <person name="Shin M."/>
            <person name="Vergez L."/>
            <person name="Schmutz J."/>
            <person name="Larimer F."/>
            <person name="Land M."/>
            <person name="Hauser L."/>
            <person name="Kyrpides N."/>
            <person name="Ivanova N."/>
            <person name="Tomasz A."/>
            <person name="Richardson P."/>
        </authorList>
    </citation>
    <scope>NUCLEOTIDE SEQUENCE [LARGE SCALE GENOMIC DNA]</scope>
    <source>
        <strain>JH1</strain>
    </source>
</reference>
<gene>
    <name evidence="1" type="primary">ugtP</name>
    <name type="ordered locus">SaurJH1_1034</name>
</gene>